<proteinExistence type="inferred from homology"/>
<organism>
    <name type="scientific">Escherichia coli (strain SMS-3-5 / SECEC)</name>
    <dbReference type="NCBI Taxonomy" id="439855"/>
    <lineage>
        <taxon>Bacteria</taxon>
        <taxon>Pseudomonadati</taxon>
        <taxon>Pseudomonadota</taxon>
        <taxon>Gammaproteobacteria</taxon>
        <taxon>Enterobacterales</taxon>
        <taxon>Enterobacteriaceae</taxon>
        <taxon>Escherichia</taxon>
    </lineage>
</organism>
<accession>B1LHE2</accession>
<comment type="function">
    <text evidence="2">With S4 and S5 plays an important role in translational accuracy.</text>
</comment>
<comment type="function">
    <text evidence="2">Interacts with and stabilizes bases of the 16S rRNA that are involved in tRNA selection in the A site and with the mRNA backbone. Located at the interface of the 30S and 50S subunits, it traverses the body of the 30S subunit contacting proteins on the other side and probably holding the rRNA structure together. The combined cluster of proteins S8, S12 and S17 appears to hold together the shoulder and platform of the 30S subunit.</text>
</comment>
<comment type="subunit">
    <text evidence="2">Part of the 30S ribosomal subunit. Contacts proteins S8 and S17. May interact with IF1 in the 30S initiation complex.</text>
</comment>
<comment type="similarity">
    <text evidence="2">Belongs to the universal ribosomal protein uS12 family.</text>
</comment>
<name>RS12_ECOSM</name>
<feature type="chain" id="PRO_1000194162" description="Small ribosomal subunit protein uS12">
    <location>
        <begin position="1"/>
        <end position="124"/>
    </location>
</feature>
<feature type="modified residue" description="3-methylthioaspartic acid" evidence="1">
    <location>
        <position position="89"/>
    </location>
</feature>
<feature type="modified residue" description="N6-acetyllysine" evidence="2">
    <location>
        <position position="108"/>
    </location>
</feature>
<reference key="1">
    <citation type="journal article" date="2008" name="J. Bacteriol.">
        <title>Insights into the environmental resistance gene pool from the genome sequence of the multidrug-resistant environmental isolate Escherichia coli SMS-3-5.</title>
        <authorList>
            <person name="Fricke W.F."/>
            <person name="Wright M.S."/>
            <person name="Lindell A.H."/>
            <person name="Harkins D.M."/>
            <person name="Baker-Austin C."/>
            <person name="Ravel J."/>
            <person name="Stepanauskas R."/>
        </authorList>
    </citation>
    <scope>NUCLEOTIDE SEQUENCE [LARGE SCALE GENOMIC DNA]</scope>
    <source>
        <strain>SMS-3-5 / SECEC</strain>
    </source>
</reference>
<dbReference type="EMBL" id="CP000970">
    <property type="protein sequence ID" value="ACB19142.1"/>
    <property type="molecule type" value="Genomic_DNA"/>
</dbReference>
<dbReference type="RefSeq" id="WP_000246815.1">
    <property type="nucleotide sequence ID" value="NC_010498.1"/>
</dbReference>
<dbReference type="SMR" id="B1LHE2"/>
<dbReference type="GeneID" id="98390450"/>
<dbReference type="KEGG" id="ecm:EcSMS35_3623"/>
<dbReference type="HOGENOM" id="CLU_104295_1_2_6"/>
<dbReference type="Proteomes" id="UP000007011">
    <property type="component" value="Chromosome"/>
</dbReference>
<dbReference type="GO" id="GO:0015935">
    <property type="term" value="C:small ribosomal subunit"/>
    <property type="evidence" value="ECO:0007669"/>
    <property type="project" value="InterPro"/>
</dbReference>
<dbReference type="GO" id="GO:0019843">
    <property type="term" value="F:rRNA binding"/>
    <property type="evidence" value="ECO:0007669"/>
    <property type="project" value="UniProtKB-UniRule"/>
</dbReference>
<dbReference type="GO" id="GO:0003735">
    <property type="term" value="F:structural constituent of ribosome"/>
    <property type="evidence" value="ECO:0007669"/>
    <property type="project" value="InterPro"/>
</dbReference>
<dbReference type="GO" id="GO:0000049">
    <property type="term" value="F:tRNA binding"/>
    <property type="evidence" value="ECO:0007669"/>
    <property type="project" value="UniProtKB-UniRule"/>
</dbReference>
<dbReference type="GO" id="GO:0006412">
    <property type="term" value="P:translation"/>
    <property type="evidence" value="ECO:0007669"/>
    <property type="project" value="UniProtKB-UniRule"/>
</dbReference>
<dbReference type="CDD" id="cd03368">
    <property type="entry name" value="Ribosomal_S12"/>
    <property type="match status" value="1"/>
</dbReference>
<dbReference type="FunFam" id="2.40.50.140:FF:000001">
    <property type="entry name" value="30S ribosomal protein S12"/>
    <property type="match status" value="1"/>
</dbReference>
<dbReference type="Gene3D" id="2.40.50.140">
    <property type="entry name" value="Nucleic acid-binding proteins"/>
    <property type="match status" value="1"/>
</dbReference>
<dbReference type="HAMAP" id="MF_00403_B">
    <property type="entry name" value="Ribosomal_uS12_B"/>
    <property type="match status" value="1"/>
</dbReference>
<dbReference type="InterPro" id="IPR012340">
    <property type="entry name" value="NA-bd_OB-fold"/>
</dbReference>
<dbReference type="InterPro" id="IPR006032">
    <property type="entry name" value="Ribosomal_uS12"/>
</dbReference>
<dbReference type="InterPro" id="IPR005679">
    <property type="entry name" value="Ribosomal_uS12_bac"/>
</dbReference>
<dbReference type="NCBIfam" id="TIGR00981">
    <property type="entry name" value="rpsL_bact"/>
    <property type="match status" value="1"/>
</dbReference>
<dbReference type="PANTHER" id="PTHR11652">
    <property type="entry name" value="30S RIBOSOMAL PROTEIN S12 FAMILY MEMBER"/>
    <property type="match status" value="1"/>
</dbReference>
<dbReference type="Pfam" id="PF00164">
    <property type="entry name" value="Ribosom_S12_S23"/>
    <property type="match status" value="1"/>
</dbReference>
<dbReference type="PIRSF" id="PIRSF002133">
    <property type="entry name" value="Ribosomal_S12/S23"/>
    <property type="match status" value="1"/>
</dbReference>
<dbReference type="PRINTS" id="PR01034">
    <property type="entry name" value="RIBOSOMALS12"/>
</dbReference>
<dbReference type="SUPFAM" id="SSF50249">
    <property type="entry name" value="Nucleic acid-binding proteins"/>
    <property type="match status" value="1"/>
</dbReference>
<dbReference type="PROSITE" id="PS00055">
    <property type="entry name" value="RIBOSOMAL_S12"/>
    <property type="match status" value="1"/>
</dbReference>
<evidence type="ECO:0000250" key="1"/>
<evidence type="ECO:0000255" key="2">
    <source>
        <dbReference type="HAMAP-Rule" id="MF_00403"/>
    </source>
</evidence>
<evidence type="ECO:0000305" key="3"/>
<keyword id="KW-0007">Acetylation</keyword>
<keyword id="KW-0488">Methylation</keyword>
<keyword id="KW-0687">Ribonucleoprotein</keyword>
<keyword id="KW-0689">Ribosomal protein</keyword>
<keyword id="KW-0694">RNA-binding</keyword>
<keyword id="KW-0699">rRNA-binding</keyword>
<keyword id="KW-0820">tRNA-binding</keyword>
<protein>
    <recommendedName>
        <fullName evidence="2">Small ribosomal subunit protein uS12</fullName>
    </recommendedName>
    <alternativeName>
        <fullName evidence="3">30S ribosomal protein S12</fullName>
    </alternativeName>
</protein>
<gene>
    <name evidence="2" type="primary">rpsL</name>
    <name type="ordered locus">EcSMS35_3623</name>
</gene>
<sequence length="124" mass="13737">MATVNQLVRKPRARKVAKSNVPALEACPQKRGVCTRVYTTTPKKPNSALRKVCRVRLTNGFEVTSYIGGEGHNLQEHSVILIRGGRVKDLPGVRYHTVRGALDCSGVKDRKQARSKYGVKRPKA</sequence>